<comment type="function">
    <text evidence="5">Involved in oxygen transport from the lung to the various peripheral tissues.</text>
</comment>
<comment type="subunit">
    <text evidence="3">Heterotetramer of two alpha chains and two beta chains. When oxygenated in vitro, exists virtually only in polymeric form. When deoxygenated, forms tetramers, octamers and larger polymers.</text>
</comment>
<comment type="tissue specificity">
    <text evidence="5">Red blood cells.</text>
</comment>
<comment type="miscellaneous">
    <text evidence="3">Displays a pronounced Bohr effect despite the lack of the His at position 146 conserved in the beta subunit in most other vertebrates. Shows chloride-dependent sensitivity to organophosphates like ATP and 2,3-diphosphoglycerate (DPG) but not to inositol hexaphosphate (IHP). Binds molecular CO(2), not bicarbonate as reported for other crocodilians.</text>
</comment>
<comment type="similarity">
    <text evidence="2">Belongs to the globin family.</text>
</comment>
<keyword id="KW-0903">Direct protein sequencing</keyword>
<keyword id="KW-0349">Heme</keyword>
<keyword id="KW-0408">Iron</keyword>
<keyword id="KW-0479">Metal-binding</keyword>
<keyword id="KW-0561">Oxygen transport</keyword>
<keyword id="KW-0813">Transport</keyword>
<sequence>SPFSAHEEKLILDLWAKVNVAACGGDALSRLLIIYPWKRRYFEHFGKMATDQDVLHNEKIQEHGKKVLASFGEAVKHLDNIQGHFAHLSKLHYEKFHVDCENFKLLGNIIIVVLGMHHPKEFTMETHAAFQKLARHVAAALSVEYY</sequence>
<dbReference type="SMR" id="C0HJE1"/>
<dbReference type="GO" id="GO:0072562">
    <property type="term" value="C:blood microparticle"/>
    <property type="evidence" value="ECO:0007669"/>
    <property type="project" value="TreeGrafter"/>
</dbReference>
<dbReference type="GO" id="GO:0031838">
    <property type="term" value="C:haptoglobin-hemoglobin complex"/>
    <property type="evidence" value="ECO:0007669"/>
    <property type="project" value="TreeGrafter"/>
</dbReference>
<dbReference type="GO" id="GO:0005833">
    <property type="term" value="C:hemoglobin complex"/>
    <property type="evidence" value="ECO:0007669"/>
    <property type="project" value="InterPro"/>
</dbReference>
<dbReference type="GO" id="GO:0031720">
    <property type="term" value="F:haptoglobin binding"/>
    <property type="evidence" value="ECO:0007669"/>
    <property type="project" value="TreeGrafter"/>
</dbReference>
<dbReference type="GO" id="GO:0020037">
    <property type="term" value="F:heme binding"/>
    <property type="evidence" value="ECO:0007669"/>
    <property type="project" value="InterPro"/>
</dbReference>
<dbReference type="GO" id="GO:0046872">
    <property type="term" value="F:metal ion binding"/>
    <property type="evidence" value="ECO:0007669"/>
    <property type="project" value="UniProtKB-KW"/>
</dbReference>
<dbReference type="GO" id="GO:0043177">
    <property type="term" value="F:organic acid binding"/>
    <property type="evidence" value="ECO:0007669"/>
    <property type="project" value="TreeGrafter"/>
</dbReference>
<dbReference type="GO" id="GO:0019825">
    <property type="term" value="F:oxygen binding"/>
    <property type="evidence" value="ECO:0007669"/>
    <property type="project" value="InterPro"/>
</dbReference>
<dbReference type="GO" id="GO:0005344">
    <property type="term" value="F:oxygen carrier activity"/>
    <property type="evidence" value="ECO:0007669"/>
    <property type="project" value="UniProtKB-KW"/>
</dbReference>
<dbReference type="GO" id="GO:0004601">
    <property type="term" value="F:peroxidase activity"/>
    <property type="evidence" value="ECO:0007669"/>
    <property type="project" value="TreeGrafter"/>
</dbReference>
<dbReference type="GO" id="GO:0042744">
    <property type="term" value="P:hydrogen peroxide catabolic process"/>
    <property type="evidence" value="ECO:0007669"/>
    <property type="project" value="TreeGrafter"/>
</dbReference>
<dbReference type="CDD" id="cd08925">
    <property type="entry name" value="Hb-beta-like"/>
    <property type="match status" value="1"/>
</dbReference>
<dbReference type="Gene3D" id="1.10.490.10">
    <property type="entry name" value="Globins"/>
    <property type="match status" value="1"/>
</dbReference>
<dbReference type="InterPro" id="IPR000971">
    <property type="entry name" value="Globin"/>
</dbReference>
<dbReference type="InterPro" id="IPR009050">
    <property type="entry name" value="Globin-like_sf"/>
</dbReference>
<dbReference type="InterPro" id="IPR012292">
    <property type="entry name" value="Globin/Proto"/>
</dbReference>
<dbReference type="InterPro" id="IPR002337">
    <property type="entry name" value="Hemoglobin_b"/>
</dbReference>
<dbReference type="InterPro" id="IPR050056">
    <property type="entry name" value="Hemoglobin_oxygen_transport"/>
</dbReference>
<dbReference type="PANTHER" id="PTHR11442">
    <property type="entry name" value="HEMOGLOBIN FAMILY MEMBER"/>
    <property type="match status" value="1"/>
</dbReference>
<dbReference type="PANTHER" id="PTHR11442:SF7">
    <property type="entry name" value="HEMOGLOBIN SUBUNIT EPSILON"/>
    <property type="match status" value="1"/>
</dbReference>
<dbReference type="Pfam" id="PF00042">
    <property type="entry name" value="Globin"/>
    <property type="match status" value="1"/>
</dbReference>
<dbReference type="PRINTS" id="PR00814">
    <property type="entry name" value="BETAHAEM"/>
</dbReference>
<dbReference type="SUPFAM" id="SSF46458">
    <property type="entry name" value="Globin-like"/>
    <property type="match status" value="1"/>
</dbReference>
<dbReference type="PROSITE" id="PS01033">
    <property type="entry name" value="GLOBIN"/>
    <property type="match status" value="1"/>
</dbReference>
<reference evidence="5" key="1">
    <citation type="journal article" date="2013" name="Am. J. Physiol.">
        <title>Lack of conventional oxygen-linked proton and anion binding sites does not impair allosteric regulation of oxygen binding in dwarf caiman hemoglobin.</title>
        <authorList>
            <person name="Weber R.E."/>
            <person name="Fago A."/>
            <person name="Malte H."/>
            <person name="Storz J.F."/>
            <person name="Gorr T.A."/>
        </authorList>
    </citation>
    <scope>PROTEIN SEQUENCE</scope>
    <scope>SUBUNIT</scope>
    <source>
        <tissue evidence="3">Erythrocyte</tissue>
    </source>
</reference>
<accession>C0HJE1</accession>
<evidence type="ECO:0000250" key="1">
    <source>
        <dbReference type="UniProtKB" id="P02070"/>
    </source>
</evidence>
<evidence type="ECO:0000255" key="2">
    <source>
        <dbReference type="PROSITE-ProRule" id="PRU00238"/>
    </source>
</evidence>
<evidence type="ECO:0000269" key="3">
    <source>
    </source>
</evidence>
<evidence type="ECO:0000303" key="4">
    <source>
    </source>
</evidence>
<evidence type="ECO:0000305" key="5"/>
<protein>
    <recommendedName>
        <fullName evidence="4">Hemoglobin subunit beta</fullName>
    </recommendedName>
    <alternativeName>
        <fullName evidence="1">Beta-globin</fullName>
    </alternativeName>
    <alternativeName>
        <fullName evidence="1">Hemoglobin beta chain</fullName>
    </alternativeName>
</protein>
<proteinExistence type="evidence at protein level"/>
<gene>
    <name evidence="1" type="primary">HBB</name>
</gene>
<name>HBB_PALPA</name>
<feature type="chain" id="PRO_0000424534" description="Hemoglobin subunit beta">
    <location>
        <begin position="1"/>
        <end position="146"/>
    </location>
</feature>
<feature type="domain" description="Globin" evidence="2">
    <location>
        <begin position="2"/>
        <end position="146"/>
    </location>
</feature>
<feature type="binding site" description="distal binding residue" evidence="1 2">
    <location>
        <position position="63"/>
    </location>
    <ligand>
        <name>heme b</name>
        <dbReference type="ChEBI" id="CHEBI:60344"/>
    </ligand>
    <ligandPart>
        <name>Fe</name>
        <dbReference type="ChEBI" id="CHEBI:18248"/>
    </ligandPart>
</feature>
<feature type="binding site" description="proximal binding residue" evidence="1 2">
    <location>
        <position position="92"/>
    </location>
    <ligand>
        <name>heme b</name>
        <dbReference type="ChEBI" id="CHEBI:60344"/>
    </ligand>
    <ligandPart>
        <name>Fe</name>
        <dbReference type="ChEBI" id="CHEBI:18248"/>
    </ligandPart>
</feature>
<organism>
    <name type="scientific">Paleosuchus palpebrosus</name>
    <name type="common">Cuvier's smooth-fronted caiman</name>
    <name type="synonym">Dwarf caiman</name>
    <dbReference type="NCBI Taxonomy" id="84099"/>
    <lineage>
        <taxon>Eukaryota</taxon>
        <taxon>Metazoa</taxon>
        <taxon>Chordata</taxon>
        <taxon>Craniata</taxon>
        <taxon>Vertebrata</taxon>
        <taxon>Euteleostomi</taxon>
        <taxon>Archelosauria</taxon>
        <taxon>Archosauria</taxon>
        <taxon>Crocodylia</taxon>
        <taxon>Alligatoridae</taxon>
        <taxon>Caimaninae</taxon>
        <taxon>Paleosuchus</taxon>
    </lineage>
</organism>